<name>HSP1_DASAL</name>
<proteinExistence type="evidence at transcript level"/>
<keyword id="KW-0158">Chromosome</keyword>
<keyword id="KW-0217">Developmental protein</keyword>
<keyword id="KW-0221">Differentiation</keyword>
<keyword id="KW-0226">DNA condensation</keyword>
<keyword id="KW-0238">DNA-binding</keyword>
<keyword id="KW-0544">Nucleosome core</keyword>
<keyword id="KW-0539">Nucleus</keyword>
<keyword id="KW-0744">Spermatogenesis</keyword>
<dbReference type="EMBL" id="AF010272">
    <property type="protein sequence ID" value="AAB69302.1"/>
    <property type="molecule type" value="Genomic_DNA"/>
</dbReference>
<dbReference type="GO" id="GO:0000786">
    <property type="term" value="C:nucleosome"/>
    <property type="evidence" value="ECO:0007669"/>
    <property type="project" value="UniProtKB-KW"/>
</dbReference>
<dbReference type="GO" id="GO:0005634">
    <property type="term" value="C:nucleus"/>
    <property type="evidence" value="ECO:0007669"/>
    <property type="project" value="UniProtKB-SubCell"/>
</dbReference>
<dbReference type="GO" id="GO:0003677">
    <property type="term" value="F:DNA binding"/>
    <property type="evidence" value="ECO:0007669"/>
    <property type="project" value="UniProtKB-KW"/>
</dbReference>
<dbReference type="GO" id="GO:0030261">
    <property type="term" value="P:chromosome condensation"/>
    <property type="evidence" value="ECO:0007669"/>
    <property type="project" value="UniProtKB-KW"/>
</dbReference>
<dbReference type="GO" id="GO:0035092">
    <property type="term" value="P:sperm DNA condensation"/>
    <property type="evidence" value="ECO:0007669"/>
    <property type="project" value="InterPro"/>
</dbReference>
<dbReference type="InterPro" id="IPR000221">
    <property type="entry name" value="Protamine_P1"/>
</dbReference>
<dbReference type="PROSITE" id="PS00048">
    <property type="entry name" value="PROTAMINE_P1"/>
    <property type="match status" value="1"/>
</dbReference>
<sequence length="62" mass="8522">MARYRRHSRSRSRSRYRRRRRRRSRGRRRRTYRRSRRHSRRRRGRRRGYSRRRYSRRGRRRY</sequence>
<gene>
    <name type="primary">PRM1</name>
</gene>
<organism>
    <name type="scientific">Dasyurus albopunctatus</name>
    <name type="common">Native cat</name>
    <name type="synonym">New Guinean quoll</name>
    <dbReference type="NCBI Taxonomy" id="32545"/>
    <lineage>
        <taxon>Eukaryota</taxon>
        <taxon>Metazoa</taxon>
        <taxon>Chordata</taxon>
        <taxon>Craniata</taxon>
        <taxon>Vertebrata</taxon>
        <taxon>Euteleostomi</taxon>
        <taxon>Mammalia</taxon>
        <taxon>Metatheria</taxon>
        <taxon>Dasyuromorphia</taxon>
        <taxon>Dasyuridae</taxon>
        <taxon>Dasyurus</taxon>
    </lineage>
</organism>
<accession>P67851</accession>
<accession>P42130</accession>
<accession>P42146</accession>
<protein>
    <recommendedName>
        <fullName>Sperm protamine P1</fullName>
    </recommendedName>
</protein>
<feature type="chain" id="PRO_0000191459" description="Sperm protamine P1">
    <location>
        <begin position="1"/>
        <end position="62"/>
    </location>
</feature>
<feature type="region of interest" description="Disordered" evidence="1">
    <location>
        <begin position="1"/>
        <end position="62"/>
    </location>
</feature>
<evidence type="ECO:0000256" key="1">
    <source>
        <dbReference type="SAM" id="MobiDB-lite"/>
    </source>
</evidence>
<evidence type="ECO:0000305" key="2"/>
<reference key="1">
    <citation type="journal article" date="1997" name="J. Mammal. Evol.">
        <title>Reconstructing the taxonomic radiation of dasyurine marsupials with cytochrome b, 12S rRNA, and protamine P1 gene trees.</title>
        <authorList>
            <person name="Krajewski C."/>
            <person name="Young J."/>
            <person name="Buckley L."/>
            <person name="Woolley P.A."/>
            <person name="Westerman M."/>
        </authorList>
    </citation>
    <scope>NUCLEOTIDE SEQUENCE [GENOMIC DNA]</scope>
</reference>
<comment type="function">
    <text>Protamines substitute for histones in the chromatin of sperm during the haploid phase of spermatogenesis. They compact sperm DNA into a highly condensed, stable and inactive complex.</text>
</comment>
<comment type="subcellular location">
    <subcellularLocation>
        <location>Nucleus</location>
    </subcellularLocation>
    <subcellularLocation>
        <location>Chromosome</location>
    </subcellularLocation>
</comment>
<comment type="tissue specificity">
    <text>Testis.</text>
</comment>
<comment type="similarity">
    <text evidence="2">Belongs to the protamine P1 family.</text>
</comment>